<organismHost>
    <name type="scientific">Vertebrata</name>
    <dbReference type="NCBI Taxonomy" id="7742"/>
</organismHost>
<organism>
    <name type="scientific">Fowlpox virus (strain NVSL)</name>
    <name type="common">FPV</name>
    <dbReference type="NCBI Taxonomy" id="928301"/>
    <lineage>
        <taxon>Viruses</taxon>
        <taxon>Varidnaviria</taxon>
        <taxon>Bamfordvirae</taxon>
        <taxon>Nucleocytoviricota</taxon>
        <taxon>Pokkesviricetes</taxon>
        <taxon>Chitovirales</taxon>
        <taxon>Poxviridae</taxon>
        <taxon>Chordopoxvirinae</taxon>
        <taxon>Avipoxvirus</taxon>
        <taxon>Fowlpox virus</taxon>
    </lineage>
</organism>
<keyword id="KW-1035">Host cytoplasm</keyword>
<keyword id="KW-0945">Host-virus interaction</keyword>
<keyword id="KW-0378">Hydrolase</keyword>
<keyword id="KW-1090">Inhibition of host innate immune response by virus</keyword>
<keyword id="KW-1114">Inhibition of host interferon signaling pathway by virus</keyword>
<keyword id="KW-1105">Inhibition of host STAT1 by virus</keyword>
<keyword id="KW-0922">Interferon antiviral system evasion</keyword>
<keyword id="KW-0426">Late protein</keyword>
<keyword id="KW-0904">Protein phosphatase</keyword>
<keyword id="KW-1185">Reference proteome</keyword>
<keyword id="KW-0899">Viral immunoevasion</keyword>
<keyword id="KW-0946">Virion</keyword>
<feature type="chain" id="PRO_0000094870" description="Probable dual specificity protein phosphatase H1 homolog">
    <location>
        <begin position="1"/>
        <end position="166"/>
    </location>
</feature>
<feature type="domain" description="Tyrosine-protein phosphatase" evidence="2">
    <location>
        <begin position="25"/>
        <end position="166"/>
    </location>
</feature>
<feature type="active site" description="Phosphocysteine intermediate" evidence="2">
    <location>
        <position position="108"/>
    </location>
</feature>
<proteinExistence type="evidence at transcript level"/>
<evidence type="ECO:0000250" key="1"/>
<evidence type="ECO:0000255" key="2">
    <source>
        <dbReference type="PROSITE-ProRule" id="PRU00160"/>
    </source>
</evidence>
<evidence type="ECO:0000255" key="3">
    <source>
        <dbReference type="PROSITE-ProRule" id="PRU10044"/>
    </source>
</evidence>
<evidence type="ECO:0000305" key="4"/>
<accession>Q9J592</accession>
<reference key="1">
    <citation type="journal article" date="2000" name="J. Virol.">
        <title>The genome of fowlpox virus.</title>
        <authorList>
            <person name="Afonso C.L."/>
            <person name="Tulman E.R."/>
            <person name="Lu Z."/>
            <person name="Zsak L."/>
            <person name="Kutish G.F."/>
            <person name="Rock D.L."/>
        </authorList>
    </citation>
    <scope>NUCLEOTIDE SEQUENCE [LARGE SCALE GENOMIC DNA]</scope>
</reference>
<comment type="function">
    <text evidence="1">Serine/Tyrosine phosphatase which down-regulates cellular antiviral response by dephosphorylating activated STAT1 and blocking interferon (IFN)-stimulated innate immune responses.</text>
</comment>
<comment type="catalytic activity">
    <reaction evidence="3">
        <text>O-phospho-L-tyrosyl-[protein] + H2O = L-tyrosyl-[protein] + phosphate</text>
        <dbReference type="Rhea" id="RHEA:10684"/>
        <dbReference type="Rhea" id="RHEA-COMP:10136"/>
        <dbReference type="Rhea" id="RHEA-COMP:20101"/>
        <dbReference type="ChEBI" id="CHEBI:15377"/>
        <dbReference type="ChEBI" id="CHEBI:43474"/>
        <dbReference type="ChEBI" id="CHEBI:46858"/>
        <dbReference type="ChEBI" id="CHEBI:61978"/>
        <dbReference type="EC" id="3.1.3.48"/>
    </reaction>
</comment>
<comment type="catalytic activity">
    <reaction>
        <text>O-phospho-L-seryl-[protein] + H2O = L-seryl-[protein] + phosphate</text>
        <dbReference type="Rhea" id="RHEA:20629"/>
        <dbReference type="Rhea" id="RHEA-COMP:9863"/>
        <dbReference type="Rhea" id="RHEA-COMP:11604"/>
        <dbReference type="ChEBI" id="CHEBI:15377"/>
        <dbReference type="ChEBI" id="CHEBI:29999"/>
        <dbReference type="ChEBI" id="CHEBI:43474"/>
        <dbReference type="ChEBI" id="CHEBI:83421"/>
    </reaction>
</comment>
<comment type="subunit">
    <text evidence="1">Homodimer.</text>
</comment>
<comment type="subcellular location">
    <subcellularLocation>
        <location evidence="1">Virion</location>
    </subcellularLocation>
    <subcellularLocation>
        <location evidence="1">Host cytoplasm</location>
    </subcellularLocation>
    <text evidence="1">Approximately 200 molecules of H1 are packaged within the virion and are essential for the viability of the virus.</text>
</comment>
<comment type="induction">
    <text>Expressed in the late phase of the viral replicative cycle.</text>
</comment>
<comment type="similarity">
    <text evidence="4">Belongs to the protein-tyrosine phosphatase family. Non-receptor class dual specificity subfamily.</text>
</comment>
<protein>
    <recommendedName>
        <fullName>Probable dual specificity protein phosphatase H1 homolog</fullName>
        <ecNumber>3.1.3.-</ecNumber>
        <ecNumber>3.1.3.48</ecNumber>
    </recommendedName>
</protein>
<name>DUSP_FOWPN</name>
<dbReference type="EC" id="3.1.3.-"/>
<dbReference type="EC" id="3.1.3.48"/>
<dbReference type="EMBL" id="AF198100">
    <property type="protein sequence ID" value="AAF44482.1"/>
    <property type="molecule type" value="Genomic_DNA"/>
</dbReference>
<dbReference type="RefSeq" id="NP_039101.1">
    <property type="nucleotide sequence ID" value="NC_002188.1"/>
</dbReference>
<dbReference type="SMR" id="Q9J592"/>
<dbReference type="GeneID" id="1486686"/>
<dbReference type="KEGG" id="vg:1486686"/>
<dbReference type="Proteomes" id="UP000008597">
    <property type="component" value="Segment"/>
</dbReference>
<dbReference type="GO" id="GO:0030430">
    <property type="term" value="C:host cell cytoplasm"/>
    <property type="evidence" value="ECO:0007669"/>
    <property type="project" value="UniProtKB-SubCell"/>
</dbReference>
<dbReference type="GO" id="GO:0044423">
    <property type="term" value="C:virion component"/>
    <property type="evidence" value="ECO:0007669"/>
    <property type="project" value="UniProtKB-KW"/>
</dbReference>
<dbReference type="GO" id="GO:0004722">
    <property type="term" value="F:protein serine/threonine phosphatase activity"/>
    <property type="evidence" value="ECO:0007669"/>
    <property type="project" value="RHEA"/>
</dbReference>
<dbReference type="GO" id="GO:0004725">
    <property type="term" value="F:protein tyrosine phosphatase activity"/>
    <property type="evidence" value="ECO:0007669"/>
    <property type="project" value="UniProtKB-EC"/>
</dbReference>
<dbReference type="GO" id="GO:0052170">
    <property type="term" value="P:symbiont-mediated suppression of host innate immune response"/>
    <property type="evidence" value="ECO:0007669"/>
    <property type="project" value="UniProtKB-KW"/>
</dbReference>
<dbReference type="GO" id="GO:0039563">
    <property type="term" value="P:symbiont-mediated suppression of host JAK-STAT cascade via inhibition of STAT1 activity"/>
    <property type="evidence" value="ECO:0007669"/>
    <property type="project" value="UniProtKB-KW"/>
</dbReference>
<dbReference type="GO" id="GO:0039502">
    <property type="term" value="P:symbiont-mediated suppression of host type I interferon-mediated signaling pathway"/>
    <property type="evidence" value="ECO:0007669"/>
    <property type="project" value="UniProtKB-KW"/>
</dbReference>
<dbReference type="CDD" id="cd14498">
    <property type="entry name" value="DSP"/>
    <property type="match status" value="1"/>
</dbReference>
<dbReference type="Gene3D" id="3.90.190.10">
    <property type="entry name" value="Protein tyrosine phosphatase superfamily"/>
    <property type="match status" value="1"/>
</dbReference>
<dbReference type="InterPro" id="IPR000340">
    <property type="entry name" value="Dual-sp_phosphatase_cat-dom"/>
</dbReference>
<dbReference type="InterPro" id="IPR052103">
    <property type="entry name" value="Dual_spec_Phospatases"/>
</dbReference>
<dbReference type="InterPro" id="IPR029021">
    <property type="entry name" value="Prot-tyrosine_phosphatase-like"/>
</dbReference>
<dbReference type="InterPro" id="IPR016130">
    <property type="entry name" value="Tyr_Pase_AS"/>
</dbReference>
<dbReference type="InterPro" id="IPR003595">
    <property type="entry name" value="Tyr_Pase_cat"/>
</dbReference>
<dbReference type="InterPro" id="IPR000387">
    <property type="entry name" value="Tyr_Pase_dom"/>
</dbReference>
<dbReference type="InterPro" id="IPR020422">
    <property type="entry name" value="TYR_PHOSPHATASE_DUAL_dom"/>
</dbReference>
<dbReference type="PANTHER" id="PTHR45961">
    <property type="entry name" value="IP21249P"/>
    <property type="match status" value="1"/>
</dbReference>
<dbReference type="PANTHER" id="PTHR45961:SF6">
    <property type="entry name" value="IP21249P"/>
    <property type="match status" value="1"/>
</dbReference>
<dbReference type="Pfam" id="PF00782">
    <property type="entry name" value="DSPc"/>
    <property type="match status" value="1"/>
</dbReference>
<dbReference type="SMART" id="SM00195">
    <property type="entry name" value="DSPc"/>
    <property type="match status" value="1"/>
</dbReference>
<dbReference type="SMART" id="SM00404">
    <property type="entry name" value="PTPc_motif"/>
    <property type="match status" value="1"/>
</dbReference>
<dbReference type="SUPFAM" id="SSF52799">
    <property type="entry name" value="(Phosphotyrosine protein) phosphatases II"/>
    <property type="match status" value="1"/>
</dbReference>
<dbReference type="PROSITE" id="PS00383">
    <property type="entry name" value="TYR_PHOSPHATASE_1"/>
    <property type="match status" value="1"/>
</dbReference>
<dbReference type="PROSITE" id="PS50056">
    <property type="entry name" value="TYR_PHOSPHATASE_2"/>
    <property type="match status" value="1"/>
</dbReference>
<dbReference type="PROSITE" id="PS50054">
    <property type="entry name" value="TYR_PHOSPHATASE_DUAL"/>
    <property type="match status" value="1"/>
</dbReference>
<gene>
    <name type="ordered locus">FPV138</name>
</gene>
<sequence length="166" mass="19637">MDEKQLYKHIITKSTNTCVKFTPRDITKITDYVYLGNYRNVIELPNKTFFKYIVNVSMLKYKLKRTDITVLHFPLEDNDTVSISKHIDAVTYVLKKCESLKIPVLVHCMAGINRSSAMIMGYLMEIRDKNIPFVIYFLYIYHELKYIRGAFIENKSFLNQIIDKYI</sequence>